<keyword id="KW-0072">Autophagy</keyword>
<keyword id="KW-0967">Endosome</keyword>
<keyword id="KW-0325">Glycoprotein</keyword>
<keyword id="KW-0378">Hydrolase</keyword>
<keyword id="KW-0442">Lipid degradation</keyword>
<keyword id="KW-0443">Lipid metabolism</keyword>
<keyword id="KW-0472">Membrane</keyword>
<keyword id="KW-1185">Reference proteome</keyword>
<keyword id="KW-0735">Signal-anchor</keyword>
<keyword id="KW-0812">Transmembrane</keyword>
<keyword id="KW-1133">Transmembrane helix</keyword>
<protein>
    <recommendedName>
        <fullName>Putative lipase atg15</fullName>
        <ecNumber>3.1.1.3</ecNumber>
    </recommendedName>
    <alternativeName>
        <fullName>Autophagy-related protein 15</fullName>
    </alternativeName>
</protein>
<evidence type="ECO:0000250" key="1"/>
<evidence type="ECO:0000250" key="2">
    <source>
        <dbReference type="UniProtKB" id="P25641"/>
    </source>
</evidence>
<evidence type="ECO:0000255" key="3"/>
<evidence type="ECO:0000255" key="4">
    <source>
        <dbReference type="PROSITE-ProRule" id="PRU10037"/>
    </source>
</evidence>
<evidence type="ECO:0000256" key="5">
    <source>
        <dbReference type="SAM" id="MobiDB-lite"/>
    </source>
</evidence>
<evidence type="ECO:0000305" key="6"/>
<accession>Q7RYY1</accession>
<organism>
    <name type="scientific">Neurospora crassa (strain ATCC 24698 / 74-OR23-1A / CBS 708.71 / DSM 1257 / FGSC 987)</name>
    <dbReference type="NCBI Taxonomy" id="367110"/>
    <lineage>
        <taxon>Eukaryota</taxon>
        <taxon>Fungi</taxon>
        <taxon>Dikarya</taxon>
        <taxon>Ascomycota</taxon>
        <taxon>Pezizomycotina</taxon>
        <taxon>Sordariomycetes</taxon>
        <taxon>Sordariomycetidae</taxon>
        <taxon>Sordariales</taxon>
        <taxon>Sordariaceae</taxon>
        <taxon>Neurospora</taxon>
    </lineage>
</organism>
<reference key="1">
    <citation type="journal article" date="2003" name="Nature">
        <title>The genome sequence of the filamentous fungus Neurospora crassa.</title>
        <authorList>
            <person name="Galagan J.E."/>
            <person name="Calvo S.E."/>
            <person name="Borkovich K.A."/>
            <person name="Selker E.U."/>
            <person name="Read N.D."/>
            <person name="Jaffe D.B."/>
            <person name="FitzHugh W."/>
            <person name="Ma L.-J."/>
            <person name="Smirnov S."/>
            <person name="Purcell S."/>
            <person name="Rehman B."/>
            <person name="Elkins T."/>
            <person name="Engels R."/>
            <person name="Wang S."/>
            <person name="Nielsen C.B."/>
            <person name="Butler J."/>
            <person name="Endrizzi M."/>
            <person name="Qui D."/>
            <person name="Ianakiev P."/>
            <person name="Bell-Pedersen D."/>
            <person name="Nelson M.A."/>
            <person name="Werner-Washburne M."/>
            <person name="Selitrennikoff C.P."/>
            <person name="Kinsey J.A."/>
            <person name="Braun E.L."/>
            <person name="Zelter A."/>
            <person name="Schulte U."/>
            <person name="Kothe G.O."/>
            <person name="Jedd G."/>
            <person name="Mewes H.-W."/>
            <person name="Staben C."/>
            <person name="Marcotte E."/>
            <person name="Greenberg D."/>
            <person name="Roy A."/>
            <person name="Foley K."/>
            <person name="Naylor J."/>
            <person name="Stange-Thomann N."/>
            <person name="Barrett R."/>
            <person name="Gnerre S."/>
            <person name="Kamal M."/>
            <person name="Kamvysselis M."/>
            <person name="Mauceli E.W."/>
            <person name="Bielke C."/>
            <person name="Rudd S."/>
            <person name="Frishman D."/>
            <person name="Krystofova S."/>
            <person name="Rasmussen C."/>
            <person name="Metzenberg R.L."/>
            <person name="Perkins D.D."/>
            <person name="Kroken S."/>
            <person name="Cogoni C."/>
            <person name="Macino G."/>
            <person name="Catcheside D.E.A."/>
            <person name="Li W."/>
            <person name="Pratt R.J."/>
            <person name="Osmani S.A."/>
            <person name="DeSouza C.P.C."/>
            <person name="Glass N.L."/>
            <person name="Orbach M.J."/>
            <person name="Berglund J.A."/>
            <person name="Voelker R."/>
            <person name="Yarden O."/>
            <person name="Plamann M."/>
            <person name="Seiler S."/>
            <person name="Dunlap J.C."/>
            <person name="Radford A."/>
            <person name="Aramayo R."/>
            <person name="Natvig D.O."/>
            <person name="Alex L.A."/>
            <person name="Mannhaupt G."/>
            <person name="Ebbole D.J."/>
            <person name="Freitag M."/>
            <person name="Paulsen I."/>
            <person name="Sachs M.S."/>
            <person name="Lander E.S."/>
            <person name="Nusbaum C."/>
            <person name="Birren B.W."/>
        </authorList>
    </citation>
    <scope>NUCLEOTIDE SEQUENCE [LARGE SCALE GENOMIC DNA]</scope>
    <source>
        <strain>ATCC 24698 / 74-OR23-1A / CBS 708.71 / DSM 1257 / FGSC 987</strain>
    </source>
</reference>
<proteinExistence type="inferred from homology"/>
<feature type="chain" id="PRO_0000317966" description="Putative lipase atg15">
    <location>
        <begin position="1"/>
        <end position="647"/>
    </location>
</feature>
<feature type="topological domain" description="Cytoplasmic" evidence="1">
    <location>
        <begin position="1"/>
        <end position="18"/>
    </location>
</feature>
<feature type="transmembrane region" description="Helical; Signal-anchor for type II membrane protein">
    <location>
        <begin position="19"/>
        <end position="39"/>
    </location>
</feature>
<feature type="topological domain" description="Lumenal" evidence="1">
    <location>
        <begin position="40"/>
        <end position="647"/>
    </location>
</feature>
<feature type="region of interest" description="Disordered" evidence="5">
    <location>
        <begin position="597"/>
        <end position="626"/>
    </location>
</feature>
<feature type="active site" description="Charge relay system" evidence="4">
    <location>
        <position position="323"/>
    </location>
</feature>
<feature type="glycosylation site" description="N-linked (GlcNAc...) asparagine" evidence="3">
    <location>
        <position position="203"/>
    </location>
</feature>
<feature type="glycosylation site" description="N-linked (GlcNAc...) asparagine" evidence="3">
    <location>
        <position position="225"/>
    </location>
</feature>
<feature type="glycosylation site" description="N-linked (GlcNAc...) asparagine" evidence="3">
    <location>
        <position position="283"/>
    </location>
</feature>
<feature type="glycosylation site" description="N-linked (GlcNAc...) asparagine" evidence="3">
    <location>
        <position position="307"/>
    </location>
</feature>
<feature type="glycosylation site" description="N-linked (GlcNAc...) asparagine" evidence="3">
    <location>
        <position position="469"/>
    </location>
</feature>
<gene>
    <name type="primary">atg15</name>
    <name type="ORF">NCU06436</name>
</gene>
<name>ATG15_NEUCR</name>
<dbReference type="EC" id="3.1.1.3"/>
<dbReference type="EMBL" id="CM002238">
    <property type="protein sequence ID" value="EAA28091.3"/>
    <property type="molecule type" value="Genomic_DNA"/>
</dbReference>
<dbReference type="RefSeq" id="XP_957327.3">
    <property type="nucleotide sequence ID" value="XM_952234.3"/>
</dbReference>
<dbReference type="FunCoup" id="Q7RYY1">
    <property type="interactions" value="49"/>
</dbReference>
<dbReference type="STRING" id="367110.Q7RYY1"/>
<dbReference type="ESTHER" id="neucr-ATG15">
    <property type="family name" value="ATG15-related-lipase"/>
</dbReference>
<dbReference type="GlyCosmos" id="Q7RYY1">
    <property type="glycosylation" value="5 sites, No reported glycans"/>
</dbReference>
<dbReference type="PaxDb" id="5141-EFNCRP00000006218"/>
<dbReference type="EnsemblFungi" id="EAA28091">
    <property type="protein sequence ID" value="EAA28091"/>
    <property type="gene ID" value="NCU06436"/>
</dbReference>
<dbReference type="GeneID" id="3873496"/>
<dbReference type="KEGG" id="ncr:NCU06436"/>
<dbReference type="VEuPathDB" id="FungiDB:NCU06436"/>
<dbReference type="HOGENOM" id="CLU_028295_0_0_1"/>
<dbReference type="InParanoid" id="Q7RYY1"/>
<dbReference type="OrthoDB" id="58570at2759"/>
<dbReference type="Proteomes" id="UP000001805">
    <property type="component" value="Chromosome 3, Linkage Group III"/>
</dbReference>
<dbReference type="GO" id="GO:0016020">
    <property type="term" value="C:membrane"/>
    <property type="evidence" value="ECO:0000318"/>
    <property type="project" value="GO_Central"/>
</dbReference>
<dbReference type="GO" id="GO:0032585">
    <property type="term" value="C:multivesicular body membrane"/>
    <property type="evidence" value="ECO:0007669"/>
    <property type="project" value="UniProtKB-SubCell"/>
</dbReference>
<dbReference type="GO" id="GO:0005775">
    <property type="term" value="C:vacuolar lumen"/>
    <property type="evidence" value="ECO:0000318"/>
    <property type="project" value="GO_Central"/>
</dbReference>
<dbReference type="GO" id="GO:0004620">
    <property type="term" value="F:phospholipase activity"/>
    <property type="evidence" value="ECO:0000318"/>
    <property type="project" value="GO_Central"/>
</dbReference>
<dbReference type="GO" id="GO:0004806">
    <property type="term" value="F:triacylglycerol lipase activity"/>
    <property type="evidence" value="ECO:0007669"/>
    <property type="project" value="UniProtKB-EC"/>
</dbReference>
<dbReference type="GO" id="GO:0034496">
    <property type="term" value="P:multivesicular body membrane disassembly"/>
    <property type="evidence" value="ECO:0000318"/>
    <property type="project" value="GO_Central"/>
</dbReference>
<dbReference type="GO" id="GO:0046461">
    <property type="term" value="P:neutral lipid catabolic process"/>
    <property type="evidence" value="ECO:0000318"/>
    <property type="project" value="GO_Central"/>
</dbReference>
<dbReference type="GO" id="GO:0006660">
    <property type="term" value="P:phosphatidylserine catabolic process"/>
    <property type="evidence" value="ECO:0000318"/>
    <property type="project" value="GO_Central"/>
</dbReference>
<dbReference type="GO" id="GO:0034727">
    <property type="term" value="P:piecemeal microautophagy of the nucleus"/>
    <property type="evidence" value="ECO:0000318"/>
    <property type="project" value="GO_Central"/>
</dbReference>
<dbReference type="CDD" id="cd00519">
    <property type="entry name" value="Lipase_3"/>
    <property type="match status" value="1"/>
</dbReference>
<dbReference type="FunFam" id="3.40.50.1820:FF:000129">
    <property type="entry name" value="Autophagy related lipase Atg15, putative"/>
    <property type="match status" value="1"/>
</dbReference>
<dbReference type="Gene3D" id="3.40.50.1820">
    <property type="entry name" value="alpha/beta hydrolase"/>
    <property type="match status" value="1"/>
</dbReference>
<dbReference type="InterPro" id="IPR029058">
    <property type="entry name" value="AB_hydrolase_fold"/>
</dbReference>
<dbReference type="InterPro" id="IPR050805">
    <property type="entry name" value="ATG15_Lipase"/>
</dbReference>
<dbReference type="InterPro" id="IPR002921">
    <property type="entry name" value="Fungal_lipase-type"/>
</dbReference>
<dbReference type="PANTHER" id="PTHR47175">
    <property type="entry name" value="LIPASE ATG15-RELATED"/>
    <property type="match status" value="1"/>
</dbReference>
<dbReference type="PANTHER" id="PTHR47175:SF2">
    <property type="entry name" value="LIPASE ATG15-RELATED"/>
    <property type="match status" value="1"/>
</dbReference>
<dbReference type="Pfam" id="PF01764">
    <property type="entry name" value="Lipase_3"/>
    <property type="match status" value="1"/>
</dbReference>
<dbReference type="SUPFAM" id="SSF53474">
    <property type="entry name" value="alpha/beta-Hydrolases"/>
    <property type="match status" value="1"/>
</dbReference>
<dbReference type="PROSITE" id="PS00120">
    <property type="entry name" value="LIPASE_SER"/>
    <property type="match status" value="1"/>
</dbReference>
<sequence length="647" mass="69561">MLPSGKRKADAFSCTSAARVTAKLALSFLALSTTPLVNAFSYEEPNAQIVLPIDASPIKPLLPEPPAPAEHKFTLRHIYHHGTYEHPTLHRKKDVPAQNADVWLAADDEYGQERIGTLKARSSPVRIQRLADRRPSVVDPMVAYARQQGYASVLSPEAWTMDEVAGPDITDKDTIISLALMAADAYVQTPDGADWEDVGAPFNRSLDFGWEGDGLRGHVFADETNSTIVIGLKGTSVAVFDGDGTTTNDKVNDNLFFSCCCAQQGPWTWHQVCDCATGTYSCNNTCVVQALRQENRYYQAGRELYANVTELYPDANVWIVGHSLGGAMSSLLGLTYGDPVVTFEAVPEALPAKRLGLPIPPGSDPDAPQTREYTGAFHIGHTADPVYVGTCNGATATCAIGGYAMESACHTGRECVYDTVGDLGWRVGIGTHKIRVVISDVLRKYEKVPECKFTPECRDCGNWKMYESNGTETTTTSSTPTSTSMTRTRTETCKTPGWWGCLDETTTTTGMATTTTSEMPTTSTTTCHTPGWFGCKDKTTTSTASTTTTPIATTATTTTTSSTTCLTPGKFWGCYDKTATTDIGSPSTSTELTITSAPALPSSVLTPSATATPPEGQPDDSGKRCRGRTWYGVCKDYEGGEGPVNDL</sequence>
<comment type="function">
    <text evidence="1">Lipase which is essential for lysis of subvacuolar cytoplasm to vacuole targeted bodies and intravacuolar autophagic bodies. Involved in the lysis of intravacuolar multivesicular body (MVB) vesicles. The intravacuolar membrane disintegration by atg15 is critical to life span extension (By similarity).</text>
</comment>
<comment type="catalytic activity">
    <reaction>
        <text>a triacylglycerol + H2O = a diacylglycerol + a fatty acid + H(+)</text>
        <dbReference type="Rhea" id="RHEA:12044"/>
        <dbReference type="ChEBI" id="CHEBI:15377"/>
        <dbReference type="ChEBI" id="CHEBI:15378"/>
        <dbReference type="ChEBI" id="CHEBI:17855"/>
        <dbReference type="ChEBI" id="CHEBI:18035"/>
        <dbReference type="ChEBI" id="CHEBI:28868"/>
        <dbReference type="EC" id="3.1.1.3"/>
    </reaction>
</comment>
<comment type="subunit">
    <text evidence="1">Binds to both phosphatidylinositol (PI) and phosphatidylinositol 3,5-bisphosphate (PIP2).</text>
</comment>
<comment type="subcellular location">
    <subcellularLocation>
        <location evidence="2">Endosome</location>
        <location evidence="2">Multivesicular body membrane</location>
        <topology evidence="2">Single-pass type II membrane protein</topology>
    </subcellularLocation>
    <subcellularLocation>
        <location evidence="2">Prevacuolar compartment membrane</location>
        <topology evidence="2">Single-pass type II membrane protein</topology>
    </subcellularLocation>
    <text evidence="2">From ER, targeted to vacuolar lumen at the MVB vesicles via the Golgi and the prevacuolar compartment (PVC).</text>
</comment>
<comment type="similarity">
    <text evidence="6">Belongs to the AB hydrolase superfamily. Lipase family.</text>
</comment>